<proteinExistence type="inferred from homology"/>
<feature type="chain" id="PRO_1000003662" description="Small ribosomal subunit protein bS18">
    <location>
        <begin position="1"/>
        <end position="75"/>
    </location>
</feature>
<accession>Q1CBW6</accession>
<organism>
    <name type="scientific">Yersinia pestis bv. Antiqua (strain Antiqua)</name>
    <dbReference type="NCBI Taxonomy" id="360102"/>
    <lineage>
        <taxon>Bacteria</taxon>
        <taxon>Pseudomonadati</taxon>
        <taxon>Pseudomonadota</taxon>
        <taxon>Gammaproteobacteria</taxon>
        <taxon>Enterobacterales</taxon>
        <taxon>Yersiniaceae</taxon>
        <taxon>Yersinia</taxon>
    </lineage>
</organism>
<keyword id="KW-0687">Ribonucleoprotein</keyword>
<keyword id="KW-0689">Ribosomal protein</keyword>
<keyword id="KW-0694">RNA-binding</keyword>
<keyword id="KW-0699">rRNA-binding</keyword>
<evidence type="ECO:0000255" key="1">
    <source>
        <dbReference type="HAMAP-Rule" id="MF_00270"/>
    </source>
</evidence>
<evidence type="ECO:0000305" key="2"/>
<dbReference type="EMBL" id="CP000308">
    <property type="protein sequence ID" value="ABG12056.1"/>
    <property type="molecule type" value="Genomic_DNA"/>
</dbReference>
<dbReference type="RefSeq" id="WP_002210155.1">
    <property type="nucleotide sequence ID" value="NZ_CP009906.1"/>
</dbReference>
<dbReference type="SMR" id="Q1CBW6"/>
<dbReference type="GeneID" id="98391335"/>
<dbReference type="KEGG" id="ypa:YPA_0087"/>
<dbReference type="Proteomes" id="UP000001971">
    <property type="component" value="Chromosome"/>
</dbReference>
<dbReference type="GO" id="GO:0022627">
    <property type="term" value="C:cytosolic small ribosomal subunit"/>
    <property type="evidence" value="ECO:0007669"/>
    <property type="project" value="TreeGrafter"/>
</dbReference>
<dbReference type="GO" id="GO:0070181">
    <property type="term" value="F:small ribosomal subunit rRNA binding"/>
    <property type="evidence" value="ECO:0007669"/>
    <property type="project" value="TreeGrafter"/>
</dbReference>
<dbReference type="GO" id="GO:0003735">
    <property type="term" value="F:structural constituent of ribosome"/>
    <property type="evidence" value="ECO:0007669"/>
    <property type="project" value="InterPro"/>
</dbReference>
<dbReference type="GO" id="GO:0006412">
    <property type="term" value="P:translation"/>
    <property type="evidence" value="ECO:0007669"/>
    <property type="project" value="UniProtKB-UniRule"/>
</dbReference>
<dbReference type="FunFam" id="4.10.640.10:FF:000001">
    <property type="entry name" value="30S ribosomal protein S18"/>
    <property type="match status" value="1"/>
</dbReference>
<dbReference type="Gene3D" id="4.10.640.10">
    <property type="entry name" value="Ribosomal protein S18"/>
    <property type="match status" value="1"/>
</dbReference>
<dbReference type="HAMAP" id="MF_00270">
    <property type="entry name" value="Ribosomal_bS18"/>
    <property type="match status" value="1"/>
</dbReference>
<dbReference type="InterPro" id="IPR001648">
    <property type="entry name" value="Ribosomal_bS18"/>
</dbReference>
<dbReference type="InterPro" id="IPR018275">
    <property type="entry name" value="Ribosomal_bS18_CS"/>
</dbReference>
<dbReference type="InterPro" id="IPR036870">
    <property type="entry name" value="Ribosomal_bS18_sf"/>
</dbReference>
<dbReference type="NCBIfam" id="TIGR00165">
    <property type="entry name" value="S18"/>
    <property type="match status" value="1"/>
</dbReference>
<dbReference type="PANTHER" id="PTHR13479">
    <property type="entry name" value="30S RIBOSOMAL PROTEIN S18"/>
    <property type="match status" value="1"/>
</dbReference>
<dbReference type="PANTHER" id="PTHR13479:SF40">
    <property type="entry name" value="SMALL RIBOSOMAL SUBUNIT PROTEIN BS18M"/>
    <property type="match status" value="1"/>
</dbReference>
<dbReference type="Pfam" id="PF01084">
    <property type="entry name" value="Ribosomal_S18"/>
    <property type="match status" value="1"/>
</dbReference>
<dbReference type="PRINTS" id="PR00974">
    <property type="entry name" value="RIBOSOMALS18"/>
</dbReference>
<dbReference type="SUPFAM" id="SSF46911">
    <property type="entry name" value="Ribosomal protein S18"/>
    <property type="match status" value="1"/>
</dbReference>
<dbReference type="PROSITE" id="PS00057">
    <property type="entry name" value="RIBOSOMAL_S18"/>
    <property type="match status" value="1"/>
</dbReference>
<comment type="function">
    <text evidence="1">Binds as a heterodimer with protein bS6 to the central domain of the 16S rRNA, where it helps stabilize the platform of the 30S subunit.</text>
</comment>
<comment type="subunit">
    <text evidence="1">Part of the 30S ribosomal subunit. Forms a tight heterodimer with protein bS6.</text>
</comment>
<comment type="similarity">
    <text evidence="1">Belongs to the bacterial ribosomal protein bS18 family.</text>
</comment>
<gene>
    <name evidence="1" type="primary">rpsR</name>
    <name type="ordered locus">YPA_0087</name>
</gene>
<sequence>MARYFRRRKFCRFTAEGVVEIDYKDIATLKNYITESGKIVPSRITGTRAKYQRQLARCIKRARYLSLLPYTDRHQ</sequence>
<name>RS18_YERPA</name>
<reference key="1">
    <citation type="journal article" date="2006" name="J. Bacteriol.">
        <title>Complete genome sequence of Yersinia pestis strains Antiqua and Nepal516: evidence of gene reduction in an emerging pathogen.</title>
        <authorList>
            <person name="Chain P.S.G."/>
            <person name="Hu P."/>
            <person name="Malfatti S.A."/>
            <person name="Radnedge L."/>
            <person name="Larimer F."/>
            <person name="Vergez L.M."/>
            <person name="Worsham P."/>
            <person name="Chu M.C."/>
            <person name="Andersen G.L."/>
        </authorList>
    </citation>
    <scope>NUCLEOTIDE SEQUENCE [LARGE SCALE GENOMIC DNA]</scope>
    <source>
        <strain>Antiqua</strain>
    </source>
</reference>
<protein>
    <recommendedName>
        <fullName evidence="1">Small ribosomal subunit protein bS18</fullName>
    </recommendedName>
    <alternativeName>
        <fullName evidence="2">30S ribosomal protein S18</fullName>
    </alternativeName>
</protein>